<accession>Q63QJ9</accession>
<protein>
    <recommendedName>
        <fullName evidence="2">D-alanine--D-alanine ligase</fullName>
        <ecNumber evidence="2">6.3.2.4</ecNumber>
    </recommendedName>
    <alternativeName>
        <fullName evidence="2">D-Ala-D-Ala ligase</fullName>
    </alternativeName>
    <alternativeName>
        <fullName evidence="2">D-alanylalanine synthetase</fullName>
    </alternativeName>
</protein>
<name>DDL_BURPS</name>
<gene>
    <name evidence="2" type="primary">ddl</name>
    <name type="ordered locus">BPSL3023</name>
</gene>
<comment type="function">
    <text evidence="2">Cell wall formation.</text>
</comment>
<comment type="catalytic activity">
    <reaction evidence="2">
        <text>2 D-alanine + ATP = D-alanyl-D-alanine + ADP + phosphate + H(+)</text>
        <dbReference type="Rhea" id="RHEA:11224"/>
        <dbReference type="ChEBI" id="CHEBI:15378"/>
        <dbReference type="ChEBI" id="CHEBI:30616"/>
        <dbReference type="ChEBI" id="CHEBI:43474"/>
        <dbReference type="ChEBI" id="CHEBI:57416"/>
        <dbReference type="ChEBI" id="CHEBI:57822"/>
        <dbReference type="ChEBI" id="CHEBI:456216"/>
        <dbReference type="EC" id="6.3.2.4"/>
    </reaction>
</comment>
<comment type="cofactor">
    <cofactor evidence="1">
        <name>Mg(2+)</name>
        <dbReference type="ChEBI" id="CHEBI:18420"/>
    </cofactor>
    <cofactor evidence="1">
        <name>Mn(2+)</name>
        <dbReference type="ChEBI" id="CHEBI:29035"/>
    </cofactor>
    <text evidence="1">Binds 2 magnesium or manganese ions per subunit.</text>
</comment>
<comment type="pathway">
    <text evidence="2">Cell wall biogenesis; peptidoglycan biosynthesis.</text>
</comment>
<comment type="subcellular location">
    <subcellularLocation>
        <location evidence="2">Cytoplasm</location>
    </subcellularLocation>
</comment>
<comment type="similarity">
    <text evidence="2">Belongs to the D-alanine--D-alanine ligase family.</text>
</comment>
<dbReference type="EC" id="6.3.2.4" evidence="2"/>
<dbReference type="EMBL" id="BX571965">
    <property type="protein sequence ID" value="CAH37035.1"/>
    <property type="molecule type" value="Genomic_DNA"/>
</dbReference>
<dbReference type="RefSeq" id="WP_004194254.1">
    <property type="nucleotide sequence ID" value="NZ_CP009538.1"/>
</dbReference>
<dbReference type="RefSeq" id="YP_109619.1">
    <property type="nucleotide sequence ID" value="NC_006350.1"/>
</dbReference>
<dbReference type="SMR" id="Q63QJ9"/>
<dbReference type="STRING" id="272560.BPSL3023"/>
<dbReference type="KEGG" id="bps:BPSL3023"/>
<dbReference type="PATRIC" id="fig|272560.51.peg.2243"/>
<dbReference type="eggNOG" id="COG1181">
    <property type="taxonomic scope" value="Bacteria"/>
</dbReference>
<dbReference type="UniPathway" id="UPA00219"/>
<dbReference type="Proteomes" id="UP000000605">
    <property type="component" value="Chromosome 1"/>
</dbReference>
<dbReference type="GO" id="GO:0005829">
    <property type="term" value="C:cytosol"/>
    <property type="evidence" value="ECO:0007669"/>
    <property type="project" value="TreeGrafter"/>
</dbReference>
<dbReference type="GO" id="GO:0005524">
    <property type="term" value="F:ATP binding"/>
    <property type="evidence" value="ECO:0007669"/>
    <property type="project" value="UniProtKB-KW"/>
</dbReference>
<dbReference type="GO" id="GO:0008716">
    <property type="term" value="F:D-alanine-D-alanine ligase activity"/>
    <property type="evidence" value="ECO:0007669"/>
    <property type="project" value="UniProtKB-UniRule"/>
</dbReference>
<dbReference type="GO" id="GO:0046872">
    <property type="term" value="F:metal ion binding"/>
    <property type="evidence" value="ECO:0007669"/>
    <property type="project" value="UniProtKB-KW"/>
</dbReference>
<dbReference type="GO" id="GO:0071555">
    <property type="term" value="P:cell wall organization"/>
    <property type="evidence" value="ECO:0007669"/>
    <property type="project" value="UniProtKB-KW"/>
</dbReference>
<dbReference type="GO" id="GO:0009252">
    <property type="term" value="P:peptidoglycan biosynthetic process"/>
    <property type="evidence" value="ECO:0007669"/>
    <property type="project" value="UniProtKB-UniRule"/>
</dbReference>
<dbReference type="GO" id="GO:0008360">
    <property type="term" value="P:regulation of cell shape"/>
    <property type="evidence" value="ECO:0007669"/>
    <property type="project" value="UniProtKB-KW"/>
</dbReference>
<dbReference type="FunFam" id="3.30.1490.20:FF:000007">
    <property type="entry name" value="D-alanine--D-alanine ligase"/>
    <property type="match status" value="1"/>
</dbReference>
<dbReference type="FunFam" id="3.30.470.20:FF:000008">
    <property type="entry name" value="D-alanine--D-alanine ligase"/>
    <property type="match status" value="1"/>
</dbReference>
<dbReference type="FunFam" id="3.40.50.20:FF:000013">
    <property type="entry name" value="D-alanine--D-alanine ligase"/>
    <property type="match status" value="1"/>
</dbReference>
<dbReference type="Gene3D" id="3.40.50.20">
    <property type="match status" value="1"/>
</dbReference>
<dbReference type="Gene3D" id="3.30.1490.20">
    <property type="entry name" value="ATP-grasp fold, A domain"/>
    <property type="match status" value="1"/>
</dbReference>
<dbReference type="Gene3D" id="3.30.470.20">
    <property type="entry name" value="ATP-grasp fold, B domain"/>
    <property type="match status" value="1"/>
</dbReference>
<dbReference type="HAMAP" id="MF_00047">
    <property type="entry name" value="Dala_Dala_lig"/>
    <property type="match status" value="1"/>
</dbReference>
<dbReference type="InterPro" id="IPR011761">
    <property type="entry name" value="ATP-grasp"/>
</dbReference>
<dbReference type="InterPro" id="IPR013815">
    <property type="entry name" value="ATP_grasp_subdomain_1"/>
</dbReference>
<dbReference type="InterPro" id="IPR000291">
    <property type="entry name" value="D-Ala_lig_Van_CS"/>
</dbReference>
<dbReference type="InterPro" id="IPR005905">
    <property type="entry name" value="D_ala_D_ala"/>
</dbReference>
<dbReference type="InterPro" id="IPR011095">
    <property type="entry name" value="Dala_Dala_lig_C"/>
</dbReference>
<dbReference type="InterPro" id="IPR011127">
    <property type="entry name" value="Dala_Dala_lig_N"/>
</dbReference>
<dbReference type="InterPro" id="IPR016185">
    <property type="entry name" value="PreATP-grasp_dom_sf"/>
</dbReference>
<dbReference type="NCBIfam" id="TIGR01205">
    <property type="entry name" value="D_ala_D_alaTIGR"/>
    <property type="match status" value="1"/>
</dbReference>
<dbReference type="NCBIfam" id="NF002378">
    <property type="entry name" value="PRK01372.1"/>
    <property type="match status" value="1"/>
</dbReference>
<dbReference type="PANTHER" id="PTHR23132">
    <property type="entry name" value="D-ALANINE--D-ALANINE LIGASE"/>
    <property type="match status" value="1"/>
</dbReference>
<dbReference type="PANTHER" id="PTHR23132:SF23">
    <property type="entry name" value="D-ALANINE--D-ALANINE LIGASE B"/>
    <property type="match status" value="1"/>
</dbReference>
<dbReference type="Pfam" id="PF07478">
    <property type="entry name" value="Dala_Dala_lig_C"/>
    <property type="match status" value="1"/>
</dbReference>
<dbReference type="Pfam" id="PF01820">
    <property type="entry name" value="Dala_Dala_lig_N"/>
    <property type="match status" value="1"/>
</dbReference>
<dbReference type="PIRSF" id="PIRSF039102">
    <property type="entry name" value="Ddl/VanB"/>
    <property type="match status" value="1"/>
</dbReference>
<dbReference type="SUPFAM" id="SSF56059">
    <property type="entry name" value="Glutathione synthetase ATP-binding domain-like"/>
    <property type="match status" value="1"/>
</dbReference>
<dbReference type="SUPFAM" id="SSF52440">
    <property type="entry name" value="PreATP-grasp domain"/>
    <property type="match status" value="1"/>
</dbReference>
<dbReference type="PROSITE" id="PS50975">
    <property type="entry name" value="ATP_GRASP"/>
    <property type="match status" value="1"/>
</dbReference>
<dbReference type="PROSITE" id="PS00843">
    <property type="entry name" value="DALA_DALA_LIGASE_1"/>
    <property type="match status" value="1"/>
</dbReference>
<dbReference type="PROSITE" id="PS00844">
    <property type="entry name" value="DALA_DALA_LIGASE_2"/>
    <property type="match status" value="1"/>
</dbReference>
<organism>
    <name type="scientific">Burkholderia pseudomallei (strain K96243)</name>
    <dbReference type="NCBI Taxonomy" id="272560"/>
    <lineage>
        <taxon>Bacteria</taxon>
        <taxon>Pseudomonadati</taxon>
        <taxon>Pseudomonadota</taxon>
        <taxon>Betaproteobacteria</taxon>
        <taxon>Burkholderiales</taxon>
        <taxon>Burkholderiaceae</taxon>
        <taxon>Burkholderia</taxon>
        <taxon>pseudomallei group</taxon>
    </lineage>
</organism>
<evidence type="ECO:0000250" key="1"/>
<evidence type="ECO:0000255" key="2">
    <source>
        <dbReference type="HAMAP-Rule" id="MF_00047"/>
    </source>
</evidence>
<feature type="chain" id="PRO_0000341074" description="D-alanine--D-alanine ligase">
    <location>
        <begin position="1"/>
        <end position="312"/>
    </location>
</feature>
<feature type="domain" description="ATP-grasp" evidence="2">
    <location>
        <begin position="108"/>
        <end position="308"/>
    </location>
</feature>
<feature type="binding site" evidence="2">
    <location>
        <begin position="138"/>
        <end position="193"/>
    </location>
    <ligand>
        <name>ATP</name>
        <dbReference type="ChEBI" id="CHEBI:30616"/>
    </ligand>
</feature>
<feature type="binding site" evidence="2">
    <location>
        <position position="262"/>
    </location>
    <ligand>
        <name>Mg(2+)</name>
        <dbReference type="ChEBI" id="CHEBI:18420"/>
        <label>1</label>
    </ligand>
</feature>
<feature type="binding site" evidence="2">
    <location>
        <position position="275"/>
    </location>
    <ligand>
        <name>Mg(2+)</name>
        <dbReference type="ChEBI" id="CHEBI:18420"/>
        <label>1</label>
    </ligand>
</feature>
<feature type="binding site" evidence="2">
    <location>
        <position position="275"/>
    </location>
    <ligand>
        <name>Mg(2+)</name>
        <dbReference type="ChEBI" id="CHEBI:18420"/>
        <label>2</label>
    </ligand>
</feature>
<feature type="binding site" evidence="2">
    <location>
        <position position="277"/>
    </location>
    <ligand>
        <name>Mg(2+)</name>
        <dbReference type="ChEBI" id="CHEBI:18420"/>
        <label>2</label>
    </ligand>
</feature>
<reference key="1">
    <citation type="journal article" date="2004" name="Proc. Natl. Acad. Sci. U.S.A.">
        <title>Genomic plasticity of the causative agent of melioidosis, Burkholderia pseudomallei.</title>
        <authorList>
            <person name="Holden M.T.G."/>
            <person name="Titball R.W."/>
            <person name="Peacock S.J."/>
            <person name="Cerdeno-Tarraga A.-M."/>
            <person name="Atkins T."/>
            <person name="Crossman L.C."/>
            <person name="Pitt T."/>
            <person name="Churcher C."/>
            <person name="Mungall K.L."/>
            <person name="Bentley S.D."/>
            <person name="Sebaihia M."/>
            <person name="Thomson N.R."/>
            <person name="Bason N."/>
            <person name="Beacham I.R."/>
            <person name="Brooks K."/>
            <person name="Brown K.A."/>
            <person name="Brown N.F."/>
            <person name="Challis G.L."/>
            <person name="Cherevach I."/>
            <person name="Chillingworth T."/>
            <person name="Cronin A."/>
            <person name="Crossett B."/>
            <person name="Davis P."/>
            <person name="DeShazer D."/>
            <person name="Feltwell T."/>
            <person name="Fraser A."/>
            <person name="Hance Z."/>
            <person name="Hauser H."/>
            <person name="Holroyd S."/>
            <person name="Jagels K."/>
            <person name="Keith K.E."/>
            <person name="Maddison M."/>
            <person name="Moule S."/>
            <person name="Price C."/>
            <person name="Quail M.A."/>
            <person name="Rabbinowitsch E."/>
            <person name="Rutherford K."/>
            <person name="Sanders M."/>
            <person name="Simmonds M."/>
            <person name="Songsivilai S."/>
            <person name="Stevens K."/>
            <person name="Tumapa S."/>
            <person name="Vesaratchavest M."/>
            <person name="Whitehead S."/>
            <person name="Yeats C."/>
            <person name="Barrell B.G."/>
            <person name="Oyston P.C.F."/>
            <person name="Parkhill J."/>
        </authorList>
    </citation>
    <scope>NUCLEOTIDE SEQUENCE [LARGE SCALE GENOMIC DNA]</scope>
    <source>
        <strain>K96243</strain>
    </source>
</reference>
<proteinExistence type="inferred from homology"/>
<sequence length="312" mass="33341">MSGIDPKRFGKVAVLLGGDSAEREVSLNSGRLVLQGLRDAGIDAHPFDPAQRPLAALKDEGFVRAFNALHGGYGENGQIQGALDFYGIRYTGSGVLGSALGLDKFRTKLVWQQTGIPTPPFETVMRGDDYAARAQDIVAKLGVPLFVKPASEGSSVAVEKVKSADALPAALEEAAKHDKIVIVEKSIEGGGEYTACIAADLDLPLIRIVPAGEFYDYHAKYIANDTQYLIPCGLDAAKEAEFKRIARRAFDVLGCTDWGRADFMLDAAGNPYFLEVNTAPGMTDHSLPPKAARAVGIGYSELVVKVLSLTLD</sequence>
<keyword id="KW-0067">ATP-binding</keyword>
<keyword id="KW-0133">Cell shape</keyword>
<keyword id="KW-0961">Cell wall biogenesis/degradation</keyword>
<keyword id="KW-0963">Cytoplasm</keyword>
<keyword id="KW-0436">Ligase</keyword>
<keyword id="KW-0460">Magnesium</keyword>
<keyword id="KW-0464">Manganese</keyword>
<keyword id="KW-0479">Metal-binding</keyword>
<keyword id="KW-0547">Nucleotide-binding</keyword>
<keyword id="KW-0573">Peptidoglycan synthesis</keyword>
<keyword id="KW-1185">Reference proteome</keyword>